<proteinExistence type="inferred from homology"/>
<evidence type="ECO:0000255" key="1">
    <source>
        <dbReference type="HAMAP-Rule" id="MF_01825"/>
    </source>
</evidence>
<gene>
    <name evidence="1" type="primary">pdxB</name>
    <name type="ordered locus">Pmen_1908</name>
</gene>
<feature type="chain" id="PRO_1000070404" description="Erythronate-4-phosphate dehydrogenase">
    <location>
        <begin position="1"/>
        <end position="376"/>
    </location>
</feature>
<feature type="active site" evidence="1">
    <location>
        <position position="203"/>
    </location>
</feature>
<feature type="active site" evidence="1">
    <location>
        <position position="232"/>
    </location>
</feature>
<feature type="active site" description="Proton donor" evidence="1">
    <location>
        <position position="249"/>
    </location>
</feature>
<feature type="binding site" evidence="1">
    <location>
        <position position="45"/>
    </location>
    <ligand>
        <name>substrate</name>
    </ligand>
</feature>
<feature type="binding site" evidence="1">
    <location>
        <position position="66"/>
    </location>
    <ligand>
        <name>substrate</name>
    </ligand>
</feature>
<feature type="binding site" evidence="1">
    <location>
        <begin position="126"/>
        <end position="127"/>
    </location>
    <ligand>
        <name>NAD(+)</name>
        <dbReference type="ChEBI" id="CHEBI:57540"/>
    </ligand>
</feature>
<feature type="binding site" evidence="1">
    <location>
        <position position="146"/>
    </location>
    <ligand>
        <name>NAD(+)</name>
        <dbReference type="ChEBI" id="CHEBI:57540"/>
    </ligand>
</feature>
<feature type="binding site" evidence="1">
    <location>
        <position position="174"/>
    </location>
    <ligand>
        <name>NAD(+)</name>
        <dbReference type="ChEBI" id="CHEBI:57540"/>
    </ligand>
</feature>
<feature type="binding site" evidence="1">
    <location>
        <begin position="201"/>
        <end position="203"/>
    </location>
    <ligand>
        <name>NAD(+)</name>
        <dbReference type="ChEBI" id="CHEBI:57540"/>
    </ligand>
</feature>
<feature type="binding site" evidence="1">
    <location>
        <position position="227"/>
    </location>
    <ligand>
        <name>NAD(+)</name>
        <dbReference type="ChEBI" id="CHEBI:57540"/>
    </ligand>
</feature>
<feature type="binding site" evidence="1">
    <location>
        <position position="252"/>
    </location>
    <ligand>
        <name>NAD(+)</name>
        <dbReference type="ChEBI" id="CHEBI:57540"/>
    </ligand>
</feature>
<feature type="binding site" evidence="1">
    <location>
        <position position="253"/>
    </location>
    <ligand>
        <name>substrate</name>
    </ligand>
</feature>
<dbReference type="EC" id="1.1.1.290" evidence="1"/>
<dbReference type="EMBL" id="CP000680">
    <property type="protein sequence ID" value="ABP84670.1"/>
    <property type="molecule type" value="Genomic_DNA"/>
</dbReference>
<dbReference type="SMR" id="A4XTK4"/>
<dbReference type="STRING" id="399739.Pmen_1908"/>
<dbReference type="KEGG" id="pmy:Pmen_1908"/>
<dbReference type="PATRIC" id="fig|399739.8.peg.1932"/>
<dbReference type="eggNOG" id="COG0111">
    <property type="taxonomic scope" value="Bacteria"/>
</dbReference>
<dbReference type="HOGENOM" id="CLU_019796_4_0_6"/>
<dbReference type="OrthoDB" id="9770208at2"/>
<dbReference type="UniPathway" id="UPA00244">
    <property type="reaction ID" value="UER00310"/>
</dbReference>
<dbReference type="GO" id="GO:0005829">
    <property type="term" value="C:cytosol"/>
    <property type="evidence" value="ECO:0007669"/>
    <property type="project" value="TreeGrafter"/>
</dbReference>
<dbReference type="GO" id="GO:0033711">
    <property type="term" value="F:4-phosphoerythronate dehydrogenase activity"/>
    <property type="evidence" value="ECO:0007669"/>
    <property type="project" value="UniProtKB-EC"/>
</dbReference>
<dbReference type="GO" id="GO:0051287">
    <property type="term" value="F:NAD binding"/>
    <property type="evidence" value="ECO:0007669"/>
    <property type="project" value="InterPro"/>
</dbReference>
<dbReference type="GO" id="GO:0046983">
    <property type="term" value="F:protein dimerization activity"/>
    <property type="evidence" value="ECO:0007669"/>
    <property type="project" value="InterPro"/>
</dbReference>
<dbReference type="GO" id="GO:0036001">
    <property type="term" value="P:'de novo' pyridoxal 5'-phosphate biosynthetic process"/>
    <property type="evidence" value="ECO:0007669"/>
    <property type="project" value="TreeGrafter"/>
</dbReference>
<dbReference type="GO" id="GO:0008615">
    <property type="term" value="P:pyridoxine biosynthetic process"/>
    <property type="evidence" value="ECO:0007669"/>
    <property type="project" value="UniProtKB-UniRule"/>
</dbReference>
<dbReference type="CDD" id="cd12158">
    <property type="entry name" value="ErythrP_dh"/>
    <property type="match status" value="1"/>
</dbReference>
<dbReference type="Gene3D" id="3.30.1370.170">
    <property type="match status" value="1"/>
</dbReference>
<dbReference type="Gene3D" id="3.40.50.720">
    <property type="entry name" value="NAD(P)-binding Rossmann-like Domain"/>
    <property type="match status" value="2"/>
</dbReference>
<dbReference type="HAMAP" id="MF_01825">
    <property type="entry name" value="PdxB"/>
    <property type="match status" value="1"/>
</dbReference>
<dbReference type="InterPro" id="IPR006139">
    <property type="entry name" value="D-isomer_2_OHA_DH_cat_dom"/>
</dbReference>
<dbReference type="InterPro" id="IPR029753">
    <property type="entry name" value="D-isomer_DH_CS"/>
</dbReference>
<dbReference type="InterPro" id="IPR006140">
    <property type="entry name" value="D-isomer_DH_NAD-bd"/>
</dbReference>
<dbReference type="InterPro" id="IPR020921">
    <property type="entry name" value="Erythronate-4-P_DHase"/>
</dbReference>
<dbReference type="InterPro" id="IPR024531">
    <property type="entry name" value="Erythronate-4-P_DHase_dimer"/>
</dbReference>
<dbReference type="InterPro" id="IPR036291">
    <property type="entry name" value="NAD(P)-bd_dom_sf"/>
</dbReference>
<dbReference type="InterPro" id="IPR038251">
    <property type="entry name" value="PdxB_dimer_sf"/>
</dbReference>
<dbReference type="NCBIfam" id="NF001309">
    <property type="entry name" value="PRK00257.1"/>
    <property type="match status" value="1"/>
</dbReference>
<dbReference type="PANTHER" id="PTHR42938">
    <property type="entry name" value="FORMATE DEHYDROGENASE 1"/>
    <property type="match status" value="1"/>
</dbReference>
<dbReference type="PANTHER" id="PTHR42938:SF9">
    <property type="entry name" value="FORMATE DEHYDROGENASE 1"/>
    <property type="match status" value="1"/>
</dbReference>
<dbReference type="Pfam" id="PF00389">
    <property type="entry name" value="2-Hacid_dh"/>
    <property type="match status" value="1"/>
</dbReference>
<dbReference type="Pfam" id="PF02826">
    <property type="entry name" value="2-Hacid_dh_C"/>
    <property type="match status" value="1"/>
</dbReference>
<dbReference type="Pfam" id="PF11890">
    <property type="entry name" value="DUF3410"/>
    <property type="match status" value="1"/>
</dbReference>
<dbReference type="SUPFAM" id="SSF52283">
    <property type="entry name" value="Formate/glycerate dehydrogenase catalytic domain-like"/>
    <property type="match status" value="1"/>
</dbReference>
<dbReference type="SUPFAM" id="SSF51735">
    <property type="entry name" value="NAD(P)-binding Rossmann-fold domains"/>
    <property type="match status" value="1"/>
</dbReference>
<dbReference type="PROSITE" id="PS00670">
    <property type="entry name" value="D_2_HYDROXYACID_DH_2"/>
    <property type="match status" value="1"/>
</dbReference>
<dbReference type="PROSITE" id="PS00671">
    <property type="entry name" value="D_2_HYDROXYACID_DH_3"/>
    <property type="match status" value="1"/>
</dbReference>
<organism>
    <name type="scientific">Ectopseudomonas mendocina (strain ymp)</name>
    <name type="common">Pseudomonas mendocina</name>
    <dbReference type="NCBI Taxonomy" id="399739"/>
    <lineage>
        <taxon>Bacteria</taxon>
        <taxon>Pseudomonadati</taxon>
        <taxon>Pseudomonadota</taxon>
        <taxon>Gammaproteobacteria</taxon>
        <taxon>Pseudomonadales</taxon>
        <taxon>Pseudomonadaceae</taxon>
        <taxon>Ectopseudomonas</taxon>
    </lineage>
</organism>
<accession>A4XTK4</accession>
<protein>
    <recommendedName>
        <fullName evidence="1">Erythronate-4-phosphate dehydrogenase</fullName>
        <ecNumber evidence="1">1.1.1.290</ecNumber>
    </recommendedName>
</protein>
<name>PDXB_ECTM1</name>
<keyword id="KW-0963">Cytoplasm</keyword>
<keyword id="KW-0520">NAD</keyword>
<keyword id="KW-0560">Oxidoreductase</keyword>
<keyword id="KW-0664">Pyridoxine biosynthesis</keyword>
<sequence length="376" mass="40694">MHIVADENIPLLDEFFAAFGSIRRLPGRGISAADVRDADLLLVRSVTQVNRALLEGSRVRFVGTCTIGTDHLDLDYFAEAGIAWSSAPGCNARGVVDYVLGSVLTLAEREGVDPAARVYGVVGAGQVGGRLVHLLRGLGWQVRVCDPPRQAAEGGDFVSLERIIEECDVISLHTPLDASTRHLFDATRLAALQPGAWLINASRGAVVDNAALRTLLPQRPDLKVVLDVWEGEPQADVELAALCQLATPHIAGYSLDGKLRGTAQIYQACCRVLGLPEQVSLDELLPAPWLSEMSIDSSADPAWVLASLCRAVYDPRRDDADFRRSLVGDADARRAAFDRLRKHYPMRREIDGLRVRIQGDAPQLAALVRALGAATT</sequence>
<comment type="function">
    <text evidence="1">Catalyzes the oxidation of erythronate-4-phosphate to 3-hydroxy-2-oxo-4-phosphonooxybutanoate.</text>
</comment>
<comment type="catalytic activity">
    <reaction evidence="1">
        <text>4-phospho-D-erythronate + NAD(+) = (R)-3-hydroxy-2-oxo-4-phosphooxybutanoate + NADH + H(+)</text>
        <dbReference type="Rhea" id="RHEA:18829"/>
        <dbReference type="ChEBI" id="CHEBI:15378"/>
        <dbReference type="ChEBI" id="CHEBI:57540"/>
        <dbReference type="ChEBI" id="CHEBI:57945"/>
        <dbReference type="ChEBI" id="CHEBI:58538"/>
        <dbReference type="ChEBI" id="CHEBI:58766"/>
        <dbReference type="EC" id="1.1.1.290"/>
    </reaction>
</comment>
<comment type="pathway">
    <text evidence="1">Cofactor biosynthesis; pyridoxine 5'-phosphate biosynthesis; pyridoxine 5'-phosphate from D-erythrose 4-phosphate: step 2/5.</text>
</comment>
<comment type="subunit">
    <text evidence="1">Homodimer.</text>
</comment>
<comment type="subcellular location">
    <subcellularLocation>
        <location evidence="1">Cytoplasm</location>
    </subcellularLocation>
</comment>
<comment type="similarity">
    <text evidence="1">Belongs to the D-isomer specific 2-hydroxyacid dehydrogenase family. PdxB subfamily.</text>
</comment>
<reference key="1">
    <citation type="submission" date="2007-04" db="EMBL/GenBank/DDBJ databases">
        <title>Complete sequence of Pseudomonas mendocina ymp.</title>
        <authorList>
            <consortium name="US DOE Joint Genome Institute"/>
            <person name="Copeland A."/>
            <person name="Lucas S."/>
            <person name="Lapidus A."/>
            <person name="Barry K."/>
            <person name="Glavina del Rio T."/>
            <person name="Dalin E."/>
            <person name="Tice H."/>
            <person name="Pitluck S."/>
            <person name="Kiss H."/>
            <person name="Brettin T."/>
            <person name="Detter J.C."/>
            <person name="Bruce D."/>
            <person name="Han C."/>
            <person name="Schmutz J."/>
            <person name="Larimer F."/>
            <person name="Land M."/>
            <person name="Hauser L."/>
            <person name="Kyrpides N."/>
            <person name="Mikhailova N."/>
            <person name="Hersman L."/>
            <person name="Dubois J."/>
            <person name="Maurice P."/>
            <person name="Richardson P."/>
        </authorList>
    </citation>
    <scope>NUCLEOTIDE SEQUENCE [LARGE SCALE GENOMIC DNA]</scope>
    <source>
        <strain>ymp</strain>
    </source>
</reference>